<feature type="chain" id="PRO_1000199300" description="Phenylalanine--tRNA ligase alpha subunit">
    <location>
        <begin position="1"/>
        <end position="355"/>
    </location>
</feature>
<feature type="binding site" evidence="1">
    <location>
        <position position="273"/>
    </location>
    <ligand>
        <name>Mg(2+)</name>
        <dbReference type="ChEBI" id="CHEBI:18420"/>
        <note>shared with beta subunit</note>
    </ligand>
</feature>
<organism>
    <name type="scientific">Bifidobacterium longum subsp. infantis (strain ATCC 15697 / DSM 20088 / JCM 1222 / NCTC 11817 / S12)</name>
    <dbReference type="NCBI Taxonomy" id="391904"/>
    <lineage>
        <taxon>Bacteria</taxon>
        <taxon>Bacillati</taxon>
        <taxon>Actinomycetota</taxon>
        <taxon>Actinomycetes</taxon>
        <taxon>Bifidobacteriales</taxon>
        <taxon>Bifidobacteriaceae</taxon>
        <taxon>Bifidobacterium</taxon>
    </lineage>
</organism>
<protein>
    <recommendedName>
        <fullName evidence="1">Phenylalanine--tRNA ligase alpha subunit</fullName>
        <ecNumber evidence="1">6.1.1.20</ecNumber>
    </recommendedName>
    <alternativeName>
        <fullName evidence="1">Phenylalanyl-tRNA synthetase alpha subunit</fullName>
        <shortName evidence="1">PheRS</shortName>
    </alternativeName>
</protein>
<comment type="catalytic activity">
    <reaction evidence="1">
        <text>tRNA(Phe) + L-phenylalanine + ATP = L-phenylalanyl-tRNA(Phe) + AMP + diphosphate + H(+)</text>
        <dbReference type="Rhea" id="RHEA:19413"/>
        <dbReference type="Rhea" id="RHEA-COMP:9668"/>
        <dbReference type="Rhea" id="RHEA-COMP:9699"/>
        <dbReference type="ChEBI" id="CHEBI:15378"/>
        <dbReference type="ChEBI" id="CHEBI:30616"/>
        <dbReference type="ChEBI" id="CHEBI:33019"/>
        <dbReference type="ChEBI" id="CHEBI:58095"/>
        <dbReference type="ChEBI" id="CHEBI:78442"/>
        <dbReference type="ChEBI" id="CHEBI:78531"/>
        <dbReference type="ChEBI" id="CHEBI:456215"/>
        <dbReference type="EC" id="6.1.1.20"/>
    </reaction>
</comment>
<comment type="cofactor">
    <cofactor evidence="1">
        <name>Mg(2+)</name>
        <dbReference type="ChEBI" id="CHEBI:18420"/>
    </cofactor>
    <text evidence="1">Binds 2 magnesium ions per tetramer.</text>
</comment>
<comment type="subunit">
    <text evidence="1">Tetramer of two alpha and two beta subunits.</text>
</comment>
<comment type="subcellular location">
    <subcellularLocation>
        <location evidence="1">Cytoplasm</location>
    </subcellularLocation>
</comment>
<comment type="similarity">
    <text evidence="1">Belongs to the class-II aminoacyl-tRNA synthetase family. Phe-tRNA synthetase alpha subunit type 1 subfamily.</text>
</comment>
<comment type="sequence caution" evidence="2">
    <conflict type="erroneous initiation">
        <sequence resource="EMBL-CDS" id="BAJ69529"/>
    </conflict>
    <text>Truncated N-terminus.</text>
</comment>
<dbReference type="EC" id="6.1.1.20" evidence="1"/>
<dbReference type="EMBL" id="CP001095">
    <property type="protein sequence ID" value="ACJ52958.1"/>
    <property type="molecule type" value="Genomic_DNA"/>
</dbReference>
<dbReference type="EMBL" id="AP010889">
    <property type="protein sequence ID" value="BAJ69529.1"/>
    <property type="status" value="ALT_INIT"/>
    <property type="molecule type" value="Genomic_DNA"/>
</dbReference>
<dbReference type="SMR" id="B7GTP9"/>
<dbReference type="KEGG" id="bln:Blon_1884"/>
<dbReference type="KEGG" id="blon:BLIJ_1950"/>
<dbReference type="PATRIC" id="fig|391904.8.peg.1955"/>
<dbReference type="HOGENOM" id="CLU_025086_0_0_11"/>
<dbReference type="Proteomes" id="UP000001360">
    <property type="component" value="Chromosome"/>
</dbReference>
<dbReference type="GO" id="GO:0005737">
    <property type="term" value="C:cytoplasm"/>
    <property type="evidence" value="ECO:0007669"/>
    <property type="project" value="UniProtKB-SubCell"/>
</dbReference>
<dbReference type="GO" id="GO:0005524">
    <property type="term" value="F:ATP binding"/>
    <property type="evidence" value="ECO:0007669"/>
    <property type="project" value="UniProtKB-UniRule"/>
</dbReference>
<dbReference type="GO" id="GO:0000287">
    <property type="term" value="F:magnesium ion binding"/>
    <property type="evidence" value="ECO:0007669"/>
    <property type="project" value="UniProtKB-UniRule"/>
</dbReference>
<dbReference type="GO" id="GO:0004826">
    <property type="term" value="F:phenylalanine-tRNA ligase activity"/>
    <property type="evidence" value="ECO:0007669"/>
    <property type="project" value="UniProtKB-UniRule"/>
</dbReference>
<dbReference type="GO" id="GO:0000049">
    <property type="term" value="F:tRNA binding"/>
    <property type="evidence" value="ECO:0007669"/>
    <property type="project" value="InterPro"/>
</dbReference>
<dbReference type="GO" id="GO:0006432">
    <property type="term" value="P:phenylalanyl-tRNA aminoacylation"/>
    <property type="evidence" value="ECO:0007669"/>
    <property type="project" value="UniProtKB-UniRule"/>
</dbReference>
<dbReference type="CDD" id="cd00496">
    <property type="entry name" value="PheRS_alpha_core"/>
    <property type="match status" value="1"/>
</dbReference>
<dbReference type="Gene3D" id="3.30.930.10">
    <property type="entry name" value="Bira Bifunctional Protein, Domain 2"/>
    <property type="match status" value="1"/>
</dbReference>
<dbReference type="HAMAP" id="MF_00281">
    <property type="entry name" value="Phe_tRNA_synth_alpha1"/>
    <property type="match status" value="1"/>
</dbReference>
<dbReference type="InterPro" id="IPR006195">
    <property type="entry name" value="aa-tRNA-synth_II"/>
</dbReference>
<dbReference type="InterPro" id="IPR045864">
    <property type="entry name" value="aa-tRNA-synth_II/BPL/LPL"/>
</dbReference>
<dbReference type="InterPro" id="IPR004529">
    <property type="entry name" value="Phe-tRNA-synth_IIc_asu"/>
</dbReference>
<dbReference type="InterPro" id="IPR004188">
    <property type="entry name" value="Phe-tRNA_ligase_II_N"/>
</dbReference>
<dbReference type="InterPro" id="IPR022911">
    <property type="entry name" value="Phe_tRNA_ligase_alpha1_bac"/>
</dbReference>
<dbReference type="InterPro" id="IPR002319">
    <property type="entry name" value="Phenylalanyl-tRNA_Synthase"/>
</dbReference>
<dbReference type="InterPro" id="IPR010978">
    <property type="entry name" value="tRNA-bd_arm"/>
</dbReference>
<dbReference type="NCBIfam" id="TIGR00468">
    <property type="entry name" value="pheS"/>
    <property type="match status" value="1"/>
</dbReference>
<dbReference type="PANTHER" id="PTHR11538:SF41">
    <property type="entry name" value="PHENYLALANINE--TRNA LIGASE, MITOCHONDRIAL"/>
    <property type="match status" value="1"/>
</dbReference>
<dbReference type="PANTHER" id="PTHR11538">
    <property type="entry name" value="PHENYLALANYL-TRNA SYNTHETASE"/>
    <property type="match status" value="1"/>
</dbReference>
<dbReference type="Pfam" id="PF02912">
    <property type="entry name" value="Phe_tRNA-synt_N"/>
    <property type="match status" value="1"/>
</dbReference>
<dbReference type="Pfam" id="PF01409">
    <property type="entry name" value="tRNA-synt_2d"/>
    <property type="match status" value="1"/>
</dbReference>
<dbReference type="SUPFAM" id="SSF55681">
    <property type="entry name" value="Class II aaRS and biotin synthetases"/>
    <property type="match status" value="1"/>
</dbReference>
<dbReference type="SUPFAM" id="SSF46589">
    <property type="entry name" value="tRNA-binding arm"/>
    <property type="match status" value="1"/>
</dbReference>
<dbReference type="PROSITE" id="PS50862">
    <property type="entry name" value="AA_TRNA_LIGASE_II"/>
    <property type="match status" value="1"/>
</dbReference>
<sequence length="355" mass="38916">MAEQMVFDADQVTAEVAEGIEKIQNASNLEELKAIKTTYAGADSAMTKASKAIGSLPADQKKEAGKLMGKLRADFGRAYGPKEVELKEAAEKAALAAETVDMTLPVNRKPLGARHPLPKLMEDVEDFFISMGWQISSGLEIEAEWYNFDSLNFGPDHPARQMQDTFYVKGNQAKDAAGFVGSNMVVRTQTSSDQVRALLTRGVPLYIASPGRVFRTDELDATHTPVFHQCEALAVDKHLTMADLKGVLDKLAVAMFGPEAKTRLRPSYFPFTEPSAELDLWFPDKKGGPGWLEWGGCGMVNPNVLKSAGIDPDVYTGFAFGVGMERTLLLRSDINDMHDLVEGDVRFAEQFVMGE</sequence>
<accession>B7GTP9</accession>
<accession>E8MLV2</accession>
<name>SYFA_BIFLS</name>
<gene>
    <name evidence="1" type="primary">pheS</name>
    <name type="ordered locus">Blon_1884</name>
    <name type="ordered locus">BLIJ_1950</name>
</gene>
<keyword id="KW-0030">Aminoacyl-tRNA synthetase</keyword>
<keyword id="KW-0067">ATP-binding</keyword>
<keyword id="KW-0963">Cytoplasm</keyword>
<keyword id="KW-0436">Ligase</keyword>
<keyword id="KW-0460">Magnesium</keyword>
<keyword id="KW-0479">Metal-binding</keyword>
<keyword id="KW-0547">Nucleotide-binding</keyword>
<keyword id="KW-0648">Protein biosynthesis</keyword>
<reference key="1">
    <citation type="journal article" date="2008" name="Proc. Natl. Acad. Sci. U.S.A.">
        <title>The genome sequence of Bifidobacterium longum subsp. infantis reveals adaptations for milk utilization within the infant microbiome.</title>
        <authorList>
            <person name="Sela D.A."/>
            <person name="Chapman J."/>
            <person name="Adeuya A."/>
            <person name="Kim J.H."/>
            <person name="Chen F."/>
            <person name="Whitehead T.R."/>
            <person name="Lapidus A."/>
            <person name="Rokhsar D.S."/>
            <person name="Lebrilla C.B."/>
            <person name="German J.B."/>
            <person name="Price N.P."/>
            <person name="Richardson P.M."/>
            <person name="Mills D.A."/>
        </authorList>
    </citation>
    <scope>NUCLEOTIDE SEQUENCE [LARGE SCALE GENOMIC DNA]</scope>
    <source>
        <strain>ATCC 15697 / DSM 20088 / JCM 1222 / NCTC 11817 / S12</strain>
    </source>
</reference>
<reference key="2">
    <citation type="journal article" date="2011" name="Nature">
        <title>Bifidobacteria can protect from enteropathogenic infection through production of acetate.</title>
        <authorList>
            <person name="Fukuda S."/>
            <person name="Toh H."/>
            <person name="Hase K."/>
            <person name="Oshima K."/>
            <person name="Nakanishi Y."/>
            <person name="Yoshimura K."/>
            <person name="Tobe T."/>
            <person name="Clarke J.M."/>
            <person name="Topping D.L."/>
            <person name="Suzuki T."/>
            <person name="Taylor T.D."/>
            <person name="Itoh K."/>
            <person name="Kikuchi J."/>
            <person name="Morita H."/>
            <person name="Hattori M."/>
            <person name="Ohno H."/>
        </authorList>
    </citation>
    <scope>NUCLEOTIDE SEQUENCE [LARGE SCALE GENOMIC DNA]</scope>
    <source>
        <strain>ATCC 15697 / DSM 20088 / JCM 1222 / NCTC 11817 / S12</strain>
    </source>
</reference>
<evidence type="ECO:0000255" key="1">
    <source>
        <dbReference type="HAMAP-Rule" id="MF_00281"/>
    </source>
</evidence>
<evidence type="ECO:0000305" key="2"/>
<proteinExistence type="inferred from homology"/>